<gene>
    <name evidence="1" type="primary">rplP</name>
    <name type="ordered locus">LCABL_26630</name>
</gene>
<comment type="function">
    <text evidence="1">Binds 23S rRNA and is also seen to make contacts with the A and possibly P site tRNAs.</text>
</comment>
<comment type="subunit">
    <text evidence="1">Part of the 50S ribosomal subunit.</text>
</comment>
<comment type="similarity">
    <text evidence="1">Belongs to the universal ribosomal protein uL16 family.</text>
</comment>
<name>RL16_LACCB</name>
<keyword id="KW-0687">Ribonucleoprotein</keyword>
<keyword id="KW-0689">Ribosomal protein</keyword>
<keyword id="KW-0694">RNA-binding</keyword>
<keyword id="KW-0699">rRNA-binding</keyword>
<keyword id="KW-0820">tRNA-binding</keyword>
<sequence length="144" mass="16037">MLVPKRVKHRREFRGKMRGAAKGGRNVDFGEYGLEALESHWITNRQIEAARVAMTRYMKRGGKVWIRIFPHKSYTSKGVGVRMGNGKGAPTGWVAVVKREKIMFEVGGVSEAVAKEALRLASNKLPIRTKIVSREEVGGQSNEG</sequence>
<protein>
    <recommendedName>
        <fullName evidence="1">Large ribosomal subunit protein uL16</fullName>
    </recommendedName>
    <alternativeName>
        <fullName evidence="2">50S ribosomal protein L16</fullName>
    </alternativeName>
</protein>
<reference key="1">
    <citation type="submission" date="2008-06" db="EMBL/GenBank/DDBJ databases">
        <title>Lactobacillus casei BL23 complete genome sequence.</title>
        <authorList>
            <person name="Maze A."/>
            <person name="Boel G."/>
            <person name="Bourand A."/>
            <person name="Loux V."/>
            <person name="Gibrat J.F."/>
            <person name="Zuniga M."/>
            <person name="Hartke A."/>
            <person name="Deutscher J."/>
        </authorList>
    </citation>
    <scope>NUCLEOTIDE SEQUENCE [LARGE SCALE GENOMIC DNA]</scope>
    <source>
        <strain>BL23</strain>
    </source>
</reference>
<proteinExistence type="inferred from homology"/>
<organism>
    <name type="scientific">Lacticaseibacillus casei (strain BL23)</name>
    <name type="common">Lactobacillus casei</name>
    <dbReference type="NCBI Taxonomy" id="543734"/>
    <lineage>
        <taxon>Bacteria</taxon>
        <taxon>Bacillati</taxon>
        <taxon>Bacillota</taxon>
        <taxon>Bacilli</taxon>
        <taxon>Lactobacillales</taxon>
        <taxon>Lactobacillaceae</taxon>
        <taxon>Lacticaseibacillus</taxon>
    </lineage>
</organism>
<feature type="chain" id="PRO_1000142986" description="Large ribosomal subunit protein uL16">
    <location>
        <begin position="1"/>
        <end position="144"/>
    </location>
</feature>
<evidence type="ECO:0000255" key="1">
    <source>
        <dbReference type="HAMAP-Rule" id="MF_01342"/>
    </source>
</evidence>
<evidence type="ECO:0000305" key="2"/>
<accession>B3WAL0</accession>
<dbReference type="EMBL" id="FM177140">
    <property type="protein sequence ID" value="CAQ67729.1"/>
    <property type="molecule type" value="Genomic_DNA"/>
</dbReference>
<dbReference type="SMR" id="B3WAL0"/>
<dbReference type="KEGG" id="lcb:LCABL_26630"/>
<dbReference type="HOGENOM" id="CLU_078858_2_1_9"/>
<dbReference type="GO" id="GO:0022625">
    <property type="term" value="C:cytosolic large ribosomal subunit"/>
    <property type="evidence" value="ECO:0007669"/>
    <property type="project" value="TreeGrafter"/>
</dbReference>
<dbReference type="GO" id="GO:0019843">
    <property type="term" value="F:rRNA binding"/>
    <property type="evidence" value="ECO:0007669"/>
    <property type="project" value="UniProtKB-UniRule"/>
</dbReference>
<dbReference type="GO" id="GO:0003735">
    <property type="term" value="F:structural constituent of ribosome"/>
    <property type="evidence" value="ECO:0007669"/>
    <property type="project" value="InterPro"/>
</dbReference>
<dbReference type="GO" id="GO:0000049">
    <property type="term" value="F:tRNA binding"/>
    <property type="evidence" value="ECO:0007669"/>
    <property type="project" value="UniProtKB-KW"/>
</dbReference>
<dbReference type="GO" id="GO:0006412">
    <property type="term" value="P:translation"/>
    <property type="evidence" value="ECO:0007669"/>
    <property type="project" value="UniProtKB-UniRule"/>
</dbReference>
<dbReference type="CDD" id="cd01433">
    <property type="entry name" value="Ribosomal_L16_L10e"/>
    <property type="match status" value="1"/>
</dbReference>
<dbReference type="FunFam" id="3.90.1170.10:FF:000001">
    <property type="entry name" value="50S ribosomal protein L16"/>
    <property type="match status" value="1"/>
</dbReference>
<dbReference type="Gene3D" id="3.90.1170.10">
    <property type="entry name" value="Ribosomal protein L10e/L16"/>
    <property type="match status" value="1"/>
</dbReference>
<dbReference type="HAMAP" id="MF_01342">
    <property type="entry name" value="Ribosomal_uL16"/>
    <property type="match status" value="1"/>
</dbReference>
<dbReference type="InterPro" id="IPR047873">
    <property type="entry name" value="Ribosomal_uL16"/>
</dbReference>
<dbReference type="InterPro" id="IPR000114">
    <property type="entry name" value="Ribosomal_uL16_bact-type"/>
</dbReference>
<dbReference type="InterPro" id="IPR020798">
    <property type="entry name" value="Ribosomal_uL16_CS"/>
</dbReference>
<dbReference type="InterPro" id="IPR016180">
    <property type="entry name" value="Ribosomal_uL16_dom"/>
</dbReference>
<dbReference type="InterPro" id="IPR036920">
    <property type="entry name" value="Ribosomal_uL16_sf"/>
</dbReference>
<dbReference type="NCBIfam" id="TIGR01164">
    <property type="entry name" value="rplP_bact"/>
    <property type="match status" value="1"/>
</dbReference>
<dbReference type="PANTHER" id="PTHR12220">
    <property type="entry name" value="50S/60S RIBOSOMAL PROTEIN L16"/>
    <property type="match status" value="1"/>
</dbReference>
<dbReference type="PANTHER" id="PTHR12220:SF13">
    <property type="entry name" value="LARGE RIBOSOMAL SUBUNIT PROTEIN UL16M"/>
    <property type="match status" value="1"/>
</dbReference>
<dbReference type="Pfam" id="PF00252">
    <property type="entry name" value="Ribosomal_L16"/>
    <property type="match status" value="1"/>
</dbReference>
<dbReference type="PRINTS" id="PR00060">
    <property type="entry name" value="RIBOSOMALL16"/>
</dbReference>
<dbReference type="SUPFAM" id="SSF54686">
    <property type="entry name" value="Ribosomal protein L16p/L10e"/>
    <property type="match status" value="1"/>
</dbReference>
<dbReference type="PROSITE" id="PS00586">
    <property type="entry name" value="RIBOSOMAL_L16_1"/>
    <property type="match status" value="1"/>
</dbReference>
<dbReference type="PROSITE" id="PS00701">
    <property type="entry name" value="RIBOSOMAL_L16_2"/>
    <property type="match status" value="1"/>
</dbReference>